<sequence>MSIAKNIENDPSKGWVVQKFGGTSVGKFPIKIAVDVAKEYLSTKRVALVCSARSTDTKAEGTTTRLIRATEAALRPAVGSVHDLVRIIETDHVQAARDFIQDVGIQDELIDAFHADCVELEQYLNAIRVLSEVSPRTRDLVIGMGERLSCRFMAAVLKDQGIDSEFIDMSHIIDEQREWRNLDASFYAYLASQLASKVTAVGNKVPVVTGFFGMVPGGLLSQIGRGYTDFCAALLAVGLNADELQIWKEVDGIFTADPRKVPTARLLPLITPEEAAELTYYGSEVIHPFTMSQVVHARIPIRIKNVGNPRGKGTVIFPDTISRHGSATPPHPPKIMPDDISASLANKGATAVTIKDTIMVINIQSNRKISAHGFLASIFAILDKYKLAVDLITTSEVHVSMALYEESDDGNMHEAFVELRRLGTLDILHGLAILSLVGKHMRNTTGYAGRMFCKLAEAQINIEMISQGASEINISCVIDEKMAVKALNVIHKELLEPLALHEVPSQASMLVEKPWLYSA</sequence>
<proteinExistence type="evidence at protein level"/>
<keyword id="KW-0028">Amino-acid biosynthesis</keyword>
<keyword id="KW-0067">ATP-binding</keyword>
<keyword id="KW-0418">Kinase</keyword>
<keyword id="KW-0486">Methionine biosynthesis</keyword>
<keyword id="KW-0547">Nucleotide-binding</keyword>
<keyword id="KW-0597">Phosphoprotein</keyword>
<keyword id="KW-1185">Reference proteome</keyword>
<keyword id="KW-0677">Repeat</keyword>
<keyword id="KW-0791">Threonine biosynthesis</keyword>
<keyword id="KW-0808">Transferase</keyword>
<evidence type="ECO:0000250" key="1">
    <source>
        <dbReference type="UniProtKB" id="P10869"/>
    </source>
</evidence>
<evidence type="ECO:0000255" key="2">
    <source>
        <dbReference type="PROSITE-ProRule" id="PRU01007"/>
    </source>
</evidence>
<evidence type="ECO:0000269" key="3">
    <source>
    </source>
</evidence>
<evidence type="ECO:0000305" key="4"/>
<evidence type="ECO:0000312" key="5">
    <source>
        <dbReference type="PomBase" id="SPBC19F5.04"/>
    </source>
</evidence>
<protein>
    <recommendedName>
        <fullName evidence="1">Aspartokinase</fullName>
        <ecNumber>2.7.2.4</ecNumber>
    </recommendedName>
    <alternativeName>
        <fullName>Aspartate kinase</fullName>
    </alternativeName>
</protein>
<feature type="chain" id="PRO_0000066689" description="Aspartokinase">
    <location>
        <begin position="1"/>
        <end position="519"/>
    </location>
</feature>
<feature type="domain" description="ACT" evidence="2">
    <location>
        <begin position="436"/>
        <end position="518"/>
    </location>
</feature>
<feature type="modified residue" description="Phosphoserine" evidence="3">
    <location>
        <position position="326"/>
    </location>
</feature>
<feature type="modified residue" description="Phosphothreonine" evidence="3">
    <location>
        <position position="328"/>
    </location>
</feature>
<comment type="function">
    <text evidence="1">Phosphorylates aspartate, the first step in the biosynthesis of amino acids that derive from aspartate (the aspartate family of amino acids), including methioinine and threonine, the latter of which is a precursor to isoleucine.</text>
</comment>
<comment type="catalytic activity">
    <reaction evidence="1">
        <text>L-aspartate + ATP = 4-phospho-L-aspartate + ADP</text>
        <dbReference type="Rhea" id="RHEA:23776"/>
        <dbReference type="ChEBI" id="CHEBI:29991"/>
        <dbReference type="ChEBI" id="CHEBI:30616"/>
        <dbReference type="ChEBI" id="CHEBI:57535"/>
        <dbReference type="ChEBI" id="CHEBI:456216"/>
        <dbReference type="EC" id="2.7.2.4"/>
    </reaction>
    <physiologicalReaction direction="left-to-right" evidence="1">
        <dbReference type="Rhea" id="RHEA:23777"/>
    </physiologicalReaction>
</comment>
<comment type="pathway">
    <text evidence="1">Amino-acid biosynthesis; L-methionine biosynthesis via de novo pathway; L-homoserine from L-aspartate: step 1/3.</text>
</comment>
<comment type="pathway">
    <text evidence="1">Amino-acid biosynthesis; L-threonine biosynthesis; L-threonine from L-aspartate: step 1/5.</text>
</comment>
<comment type="similarity">
    <text evidence="4">Belongs to the aspartokinase family.</text>
</comment>
<dbReference type="EC" id="2.7.2.4"/>
<dbReference type="EMBL" id="CU329671">
    <property type="protein sequence ID" value="CAA18652.1"/>
    <property type="molecule type" value="Genomic_DNA"/>
</dbReference>
<dbReference type="PIR" id="T39822">
    <property type="entry name" value="T39822"/>
</dbReference>
<dbReference type="RefSeq" id="NP_596542.1">
    <property type="nucleotide sequence ID" value="NM_001022463.2"/>
</dbReference>
<dbReference type="SMR" id="O60163"/>
<dbReference type="BioGRID" id="277128">
    <property type="interactions" value="6"/>
</dbReference>
<dbReference type="FunCoup" id="O60163">
    <property type="interactions" value="220"/>
</dbReference>
<dbReference type="STRING" id="284812.O60163"/>
<dbReference type="iPTMnet" id="O60163"/>
<dbReference type="SwissPalm" id="O60163"/>
<dbReference type="PaxDb" id="4896-SPBC19F5.04.1"/>
<dbReference type="EnsemblFungi" id="SPBC19F5.04.1">
    <property type="protein sequence ID" value="SPBC19F5.04.1:pep"/>
    <property type="gene ID" value="SPBC19F5.04"/>
</dbReference>
<dbReference type="GeneID" id="2540602"/>
<dbReference type="KEGG" id="spo:2540602"/>
<dbReference type="PomBase" id="SPBC19F5.04"/>
<dbReference type="VEuPathDB" id="FungiDB:SPBC19F5.04"/>
<dbReference type="eggNOG" id="KOG0456">
    <property type="taxonomic scope" value="Eukaryota"/>
</dbReference>
<dbReference type="HOGENOM" id="CLU_009116_6_4_1"/>
<dbReference type="InParanoid" id="O60163"/>
<dbReference type="OMA" id="DNINIMM"/>
<dbReference type="PhylomeDB" id="O60163"/>
<dbReference type="UniPathway" id="UPA00050">
    <property type="reaction ID" value="UER00461"/>
</dbReference>
<dbReference type="UniPathway" id="UPA00051">
    <property type="reaction ID" value="UER00462"/>
</dbReference>
<dbReference type="PRO" id="PR:O60163"/>
<dbReference type="Proteomes" id="UP000002485">
    <property type="component" value="Chromosome II"/>
</dbReference>
<dbReference type="GO" id="GO:0005829">
    <property type="term" value="C:cytosol"/>
    <property type="evidence" value="ECO:0007005"/>
    <property type="project" value="PomBase"/>
</dbReference>
<dbReference type="GO" id="GO:0004072">
    <property type="term" value="F:aspartate kinase activity"/>
    <property type="evidence" value="ECO:0000250"/>
    <property type="project" value="UniProtKB"/>
</dbReference>
<dbReference type="GO" id="GO:0005524">
    <property type="term" value="F:ATP binding"/>
    <property type="evidence" value="ECO:0007669"/>
    <property type="project" value="UniProtKB-KW"/>
</dbReference>
<dbReference type="GO" id="GO:0071266">
    <property type="term" value="P:'de novo' L-methionine biosynthetic process"/>
    <property type="evidence" value="ECO:0000250"/>
    <property type="project" value="UniProtKB"/>
</dbReference>
<dbReference type="GO" id="GO:0009090">
    <property type="term" value="P:homoserine biosynthetic process"/>
    <property type="evidence" value="ECO:0000318"/>
    <property type="project" value="GO_Central"/>
</dbReference>
<dbReference type="GO" id="GO:0009089">
    <property type="term" value="P:lysine biosynthetic process via diaminopimelate"/>
    <property type="evidence" value="ECO:0007669"/>
    <property type="project" value="UniProtKB-UniPathway"/>
</dbReference>
<dbReference type="GO" id="GO:0009088">
    <property type="term" value="P:threonine biosynthetic process"/>
    <property type="evidence" value="ECO:0000250"/>
    <property type="project" value="UniProtKB"/>
</dbReference>
<dbReference type="CDD" id="cd04247">
    <property type="entry name" value="AAK_AK-Hom3"/>
    <property type="match status" value="1"/>
</dbReference>
<dbReference type="CDD" id="cd04934">
    <property type="entry name" value="ACT_AK-Hom3_1"/>
    <property type="match status" value="1"/>
</dbReference>
<dbReference type="CDD" id="cd04919">
    <property type="entry name" value="ACT_AK-Hom3_2"/>
    <property type="match status" value="1"/>
</dbReference>
<dbReference type="FunFam" id="3.30.2130.10:FF:000001">
    <property type="entry name" value="Bifunctional aspartokinase/homoserine dehydrogenase"/>
    <property type="match status" value="1"/>
</dbReference>
<dbReference type="FunFam" id="3.40.1160.10:FF:000023">
    <property type="entry name" value="Probable aspartokinase"/>
    <property type="match status" value="1"/>
</dbReference>
<dbReference type="Gene3D" id="3.30.70.260">
    <property type="match status" value="2"/>
</dbReference>
<dbReference type="Gene3D" id="3.40.1160.10">
    <property type="entry name" value="Acetylglutamate kinase-like"/>
    <property type="match status" value="1"/>
</dbReference>
<dbReference type="InterPro" id="IPR036393">
    <property type="entry name" value="AceGlu_kinase-like_sf"/>
</dbReference>
<dbReference type="InterPro" id="IPR045865">
    <property type="entry name" value="ACT-like_dom_sf"/>
</dbReference>
<dbReference type="InterPro" id="IPR054352">
    <property type="entry name" value="ACT_Aspartokinase"/>
</dbReference>
<dbReference type="InterPro" id="IPR002912">
    <property type="entry name" value="ACT_dom"/>
</dbReference>
<dbReference type="InterPro" id="IPR041747">
    <property type="entry name" value="AK-Hom3"/>
</dbReference>
<dbReference type="InterPro" id="IPR001048">
    <property type="entry name" value="Asp/Glu/Uridylate_kinase"/>
</dbReference>
<dbReference type="InterPro" id="IPR001341">
    <property type="entry name" value="Asp_kinase"/>
</dbReference>
<dbReference type="InterPro" id="IPR018042">
    <property type="entry name" value="Aspartate_kinase_CS"/>
</dbReference>
<dbReference type="NCBIfam" id="TIGR00657">
    <property type="entry name" value="asp_kinases"/>
    <property type="match status" value="1"/>
</dbReference>
<dbReference type="PANTHER" id="PTHR21499">
    <property type="entry name" value="ASPARTATE KINASE"/>
    <property type="match status" value="1"/>
</dbReference>
<dbReference type="PANTHER" id="PTHR21499:SF59">
    <property type="entry name" value="ASPARTOKINASE"/>
    <property type="match status" value="1"/>
</dbReference>
<dbReference type="Pfam" id="PF00696">
    <property type="entry name" value="AA_kinase"/>
    <property type="match status" value="1"/>
</dbReference>
<dbReference type="Pfam" id="PF22468">
    <property type="entry name" value="ACT_9"/>
    <property type="match status" value="1"/>
</dbReference>
<dbReference type="SUPFAM" id="SSF55021">
    <property type="entry name" value="ACT-like"/>
    <property type="match status" value="2"/>
</dbReference>
<dbReference type="SUPFAM" id="SSF53633">
    <property type="entry name" value="Carbamate kinase-like"/>
    <property type="match status" value="1"/>
</dbReference>
<dbReference type="PROSITE" id="PS51671">
    <property type="entry name" value="ACT"/>
    <property type="match status" value="1"/>
</dbReference>
<dbReference type="PROSITE" id="PS00324">
    <property type="entry name" value="ASPARTOKINASE"/>
    <property type="match status" value="1"/>
</dbReference>
<accession>O60163</accession>
<gene>
    <name evidence="5" type="primary">hom3</name>
    <name type="ORF">SPBC19F5.04</name>
</gene>
<organism>
    <name type="scientific">Schizosaccharomyces pombe (strain 972 / ATCC 24843)</name>
    <name type="common">Fission yeast</name>
    <dbReference type="NCBI Taxonomy" id="284812"/>
    <lineage>
        <taxon>Eukaryota</taxon>
        <taxon>Fungi</taxon>
        <taxon>Dikarya</taxon>
        <taxon>Ascomycota</taxon>
        <taxon>Taphrinomycotina</taxon>
        <taxon>Schizosaccharomycetes</taxon>
        <taxon>Schizosaccharomycetales</taxon>
        <taxon>Schizosaccharomycetaceae</taxon>
        <taxon>Schizosaccharomyces</taxon>
    </lineage>
</organism>
<reference key="1">
    <citation type="journal article" date="2002" name="Nature">
        <title>The genome sequence of Schizosaccharomyces pombe.</title>
        <authorList>
            <person name="Wood V."/>
            <person name="Gwilliam R."/>
            <person name="Rajandream M.A."/>
            <person name="Lyne M.H."/>
            <person name="Lyne R."/>
            <person name="Stewart A."/>
            <person name="Sgouros J.G."/>
            <person name="Peat N."/>
            <person name="Hayles J."/>
            <person name="Baker S.G."/>
            <person name="Basham D."/>
            <person name="Bowman S."/>
            <person name="Brooks K."/>
            <person name="Brown D."/>
            <person name="Brown S."/>
            <person name="Chillingworth T."/>
            <person name="Churcher C.M."/>
            <person name="Collins M."/>
            <person name="Connor R."/>
            <person name="Cronin A."/>
            <person name="Davis P."/>
            <person name="Feltwell T."/>
            <person name="Fraser A."/>
            <person name="Gentles S."/>
            <person name="Goble A."/>
            <person name="Hamlin N."/>
            <person name="Harris D.E."/>
            <person name="Hidalgo J."/>
            <person name="Hodgson G."/>
            <person name="Holroyd S."/>
            <person name="Hornsby T."/>
            <person name="Howarth S."/>
            <person name="Huckle E.J."/>
            <person name="Hunt S."/>
            <person name="Jagels K."/>
            <person name="James K.D."/>
            <person name="Jones L."/>
            <person name="Jones M."/>
            <person name="Leather S."/>
            <person name="McDonald S."/>
            <person name="McLean J."/>
            <person name="Mooney P."/>
            <person name="Moule S."/>
            <person name="Mungall K.L."/>
            <person name="Murphy L.D."/>
            <person name="Niblett D."/>
            <person name="Odell C."/>
            <person name="Oliver K."/>
            <person name="O'Neil S."/>
            <person name="Pearson D."/>
            <person name="Quail M.A."/>
            <person name="Rabbinowitsch E."/>
            <person name="Rutherford K.M."/>
            <person name="Rutter S."/>
            <person name="Saunders D."/>
            <person name="Seeger K."/>
            <person name="Sharp S."/>
            <person name="Skelton J."/>
            <person name="Simmonds M.N."/>
            <person name="Squares R."/>
            <person name="Squares S."/>
            <person name="Stevens K."/>
            <person name="Taylor K."/>
            <person name="Taylor R.G."/>
            <person name="Tivey A."/>
            <person name="Walsh S.V."/>
            <person name="Warren T."/>
            <person name="Whitehead S."/>
            <person name="Woodward J.R."/>
            <person name="Volckaert G."/>
            <person name="Aert R."/>
            <person name="Robben J."/>
            <person name="Grymonprez B."/>
            <person name="Weltjens I."/>
            <person name="Vanstreels E."/>
            <person name="Rieger M."/>
            <person name="Schaefer M."/>
            <person name="Mueller-Auer S."/>
            <person name="Gabel C."/>
            <person name="Fuchs M."/>
            <person name="Duesterhoeft A."/>
            <person name="Fritzc C."/>
            <person name="Holzer E."/>
            <person name="Moestl D."/>
            <person name="Hilbert H."/>
            <person name="Borzym K."/>
            <person name="Langer I."/>
            <person name="Beck A."/>
            <person name="Lehrach H."/>
            <person name="Reinhardt R."/>
            <person name="Pohl T.M."/>
            <person name="Eger P."/>
            <person name="Zimmermann W."/>
            <person name="Wedler H."/>
            <person name="Wambutt R."/>
            <person name="Purnelle B."/>
            <person name="Goffeau A."/>
            <person name="Cadieu E."/>
            <person name="Dreano S."/>
            <person name="Gloux S."/>
            <person name="Lelaure V."/>
            <person name="Mottier S."/>
            <person name="Galibert F."/>
            <person name="Aves S.J."/>
            <person name="Xiang Z."/>
            <person name="Hunt C."/>
            <person name="Moore K."/>
            <person name="Hurst S.M."/>
            <person name="Lucas M."/>
            <person name="Rochet M."/>
            <person name="Gaillardin C."/>
            <person name="Tallada V.A."/>
            <person name="Garzon A."/>
            <person name="Thode G."/>
            <person name="Daga R.R."/>
            <person name="Cruzado L."/>
            <person name="Jimenez J."/>
            <person name="Sanchez M."/>
            <person name="del Rey F."/>
            <person name="Benito J."/>
            <person name="Dominguez A."/>
            <person name="Revuelta J.L."/>
            <person name="Moreno S."/>
            <person name="Armstrong J."/>
            <person name="Forsburg S.L."/>
            <person name="Cerutti L."/>
            <person name="Lowe T."/>
            <person name="McCombie W.R."/>
            <person name="Paulsen I."/>
            <person name="Potashkin J."/>
            <person name="Shpakovski G.V."/>
            <person name="Ussery D."/>
            <person name="Barrell B.G."/>
            <person name="Nurse P."/>
        </authorList>
    </citation>
    <scope>NUCLEOTIDE SEQUENCE [LARGE SCALE GENOMIC DNA]</scope>
    <source>
        <strain>972 / ATCC 24843</strain>
    </source>
</reference>
<reference key="2">
    <citation type="journal article" date="2008" name="J. Proteome Res.">
        <title>Phosphoproteome analysis of fission yeast.</title>
        <authorList>
            <person name="Wilson-Grady J.T."/>
            <person name="Villen J."/>
            <person name="Gygi S.P."/>
        </authorList>
    </citation>
    <scope>PHOSPHORYLATION [LARGE SCALE ANALYSIS] AT SER-326 AND THR-328</scope>
    <scope>IDENTIFICATION BY MASS SPECTROMETRY</scope>
</reference>
<name>AK_SCHPO</name>